<dbReference type="EMBL" id="BA000039">
    <property type="protein sequence ID" value="BAC07593.1"/>
    <property type="molecule type" value="Genomic_DNA"/>
</dbReference>
<dbReference type="RefSeq" id="NP_680831.1">
    <property type="nucleotide sequence ID" value="NC_004113.1"/>
</dbReference>
<dbReference type="RefSeq" id="WP_011055895.1">
    <property type="nucleotide sequence ID" value="NC_004113.1"/>
</dbReference>
<dbReference type="SMR" id="Q8DMS1"/>
<dbReference type="STRING" id="197221.gene:10746618"/>
<dbReference type="EnsemblBacteria" id="BAC07593">
    <property type="protein sequence ID" value="BAC07593"/>
    <property type="gene ID" value="BAC07593"/>
</dbReference>
<dbReference type="KEGG" id="tel:tsl0040"/>
<dbReference type="PATRIC" id="fig|197221.4.peg.39"/>
<dbReference type="eggNOG" id="COG0228">
    <property type="taxonomic scope" value="Bacteria"/>
</dbReference>
<dbReference type="Proteomes" id="UP000000440">
    <property type="component" value="Chromosome"/>
</dbReference>
<dbReference type="GO" id="GO:0005737">
    <property type="term" value="C:cytoplasm"/>
    <property type="evidence" value="ECO:0007669"/>
    <property type="project" value="UniProtKB-ARBA"/>
</dbReference>
<dbReference type="GO" id="GO:0015935">
    <property type="term" value="C:small ribosomal subunit"/>
    <property type="evidence" value="ECO:0007669"/>
    <property type="project" value="TreeGrafter"/>
</dbReference>
<dbReference type="GO" id="GO:0003735">
    <property type="term" value="F:structural constituent of ribosome"/>
    <property type="evidence" value="ECO:0007669"/>
    <property type="project" value="InterPro"/>
</dbReference>
<dbReference type="GO" id="GO:0006412">
    <property type="term" value="P:translation"/>
    <property type="evidence" value="ECO:0007669"/>
    <property type="project" value="UniProtKB-UniRule"/>
</dbReference>
<dbReference type="Gene3D" id="3.30.1320.10">
    <property type="match status" value="1"/>
</dbReference>
<dbReference type="HAMAP" id="MF_00385">
    <property type="entry name" value="Ribosomal_bS16"/>
    <property type="match status" value="1"/>
</dbReference>
<dbReference type="InterPro" id="IPR000307">
    <property type="entry name" value="Ribosomal_bS16"/>
</dbReference>
<dbReference type="InterPro" id="IPR020592">
    <property type="entry name" value="Ribosomal_bS16_CS"/>
</dbReference>
<dbReference type="InterPro" id="IPR023803">
    <property type="entry name" value="Ribosomal_bS16_dom_sf"/>
</dbReference>
<dbReference type="NCBIfam" id="TIGR00002">
    <property type="entry name" value="S16"/>
    <property type="match status" value="1"/>
</dbReference>
<dbReference type="PANTHER" id="PTHR12919">
    <property type="entry name" value="30S RIBOSOMAL PROTEIN S16"/>
    <property type="match status" value="1"/>
</dbReference>
<dbReference type="PANTHER" id="PTHR12919:SF20">
    <property type="entry name" value="SMALL RIBOSOMAL SUBUNIT PROTEIN BS16M"/>
    <property type="match status" value="1"/>
</dbReference>
<dbReference type="Pfam" id="PF00886">
    <property type="entry name" value="Ribosomal_S16"/>
    <property type="match status" value="1"/>
</dbReference>
<dbReference type="SUPFAM" id="SSF54565">
    <property type="entry name" value="Ribosomal protein S16"/>
    <property type="match status" value="1"/>
</dbReference>
<dbReference type="PROSITE" id="PS00732">
    <property type="entry name" value="RIBOSOMAL_S16"/>
    <property type="match status" value="1"/>
</dbReference>
<proteinExistence type="inferred from homology"/>
<protein>
    <recommendedName>
        <fullName evidence="1">Small ribosomal subunit protein bS16</fullName>
    </recommendedName>
    <alternativeName>
        <fullName evidence="2">30S ribosomal protein S16</fullName>
    </alternativeName>
</protein>
<comment type="similarity">
    <text evidence="1">Belongs to the bacterial ribosomal protein bS16 family.</text>
</comment>
<name>RS16_THEVB</name>
<evidence type="ECO:0000255" key="1">
    <source>
        <dbReference type="HAMAP-Rule" id="MF_00385"/>
    </source>
</evidence>
<evidence type="ECO:0000305" key="2"/>
<keyword id="KW-1185">Reference proteome</keyword>
<keyword id="KW-0687">Ribonucleoprotein</keyword>
<keyword id="KW-0689">Ribosomal protein</keyword>
<organism>
    <name type="scientific">Thermosynechococcus vestitus (strain NIES-2133 / IAM M-273 / BP-1)</name>
    <dbReference type="NCBI Taxonomy" id="197221"/>
    <lineage>
        <taxon>Bacteria</taxon>
        <taxon>Bacillati</taxon>
        <taxon>Cyanobacteriota</taxon>
        <taxon>Cyanophyceae</taxon>
        <taxon>Acaryochloridales</taxon>
        <taxon>Thermosynechococcaceae</taxon>
        <taxon>Thermosynechococcus</taxon>
    </lineage>
</organism>
<gene>
    <name evidence="1" type="primary">rpsP</name>
    <name evidence="1" type="synonym">rps16</name>
    <name type="ordered locus">tsl0040</name>
</gene>
<feature type="chain" id="PRO_0000167263" description="Small ribosomal subunit protein bS16">
    <location>
        <begin position="1"/>
        <end position="83"/>
    </location>
</feature>
<sequence>MIKLRLKRYGKKRNATYRIVAMNNTDRRDGRALEELGFYDPIHNEVRLKEEAIKRRLAQGAQPTDTVRRLFVKANLLPETAQK</sequence>
<reference key="1">
    <citation type="journal article" date="2002" name="DNA Res.">
        <title>Complete genome structure of the thermophilic cyanobacterium Thermosynechococcus elongatus BP-1.</title>
        <authorList>
            <person name="Nakamura Y."/>
            <person name="Kaneko T."/>
            <person name="Sato S."/>
            <person name="Ikeuchi M."/>
            <person name="Katoh H."/>
            <person name="Sasamoto S."/>
            <person name="Watanabe A."/>
            <person name="Iriguchi M."/>
            <person name="Kawashima K."/>
            <person name="Kimura T."/>
            <person name="Kishida Y."/>
            <person name="Kiyokawa C."/>
            <person name="Kohara M."/>
            <person name="Matsumoto M."/>
            <person name="Matsuno A."/>
            <person name="Nakazaki N."/>
            <person name="Shimpo S."/>
            <person name="Sugimoto M."/>
            <person name="Takeuchi C."/>
            <person name="Yamada M."/>
            <person name="Tabata S."/>
        </authorList>
    </citation>
    <scope>NUCLEOTIDE SEQUENCE [LARGE SCALE GENOMIC DNA]</scope>
    <source>
        <strain>NIES-2133 / IAM M-273 / BP-1</strain>
    </source>
</reference>
<accession>Q8DMS1</accession>